<organism>
    <name type="scientific">Shigella dysenteriae serotype 1 (strain Sd197)</name>
    <dbReference type="NCBI Taxonomy" id="300267"/>
    <lineage>
        <taxon>Bacteria</taxon>
        <taxon>Pseudomonadati</taxon>
        <taxon>Pseudomonadota</taxon>
        <taxon>Gammaproteobacteria</taxon>
        <taxon>Enterobacterales</taxon>
        <taxon>Enterobacteriaceae</taxon>
        <taxon>Shigella</taxon>
    </lineage>
</organism>
<feature type="chain" id="PRO_1000064132" description="Probable phosphoglycerate mutase GpmB">
    <location>
        <begin position="1"/>
        <end position="215"/>
    </location>
</feature>
<feature type="active site" description="Tele-phosphohistidine intermediate" evidence="1">
    <location>
        <position position="9"/>
    </location>
</feature>
<feature type="active site" description="Proton donor/acceptor" evidence="1">
    <location>
        <position position="82"/>
    </location>
</feature>
<feature type="binding site" evidence="1">
    <location>
        <begin position="8"/>
        <end position="15"/>
    </location>
    <ligand>
        <name>substrate</name>
    </ligand>
</feature>
<feature type="binding site" evidence="1">
    <location>
        <begin position="21"/>
        <end position="22"/>
    </location>
    <ligand>
        <name>substrate</name>
    </ligand>
</feature>
<feature type="binding site" evidence="1">
    <location>
        <position position="58"/>
    </location>
    <ligand>
        <name>substrate</name>
    </ligand>
</feature>
<feature type="binding site" evidence="1">
    <location>
        <position position="60"/>
    </location>
    <ligand>
        <name>substrate</name>
    </ligand>
</feature>
<feature type="binding site" evidence="1">
    <location>
        <begin position="82"/>
        <end position="85"/>
    </location>
    <ligand>
        <name>substrate</name>
    </ligand>
</feature>
<feature type="binding site" evidence="1">
    <location>
        <begin position="104"/>
        <end position="105"/>
    </location>
    <ligand>
        <name>substrate</name>
    </ligand>
</feature>
<feature type="binding site" evidence="1">
    <location>
        <begin position="151"/>
        <end position="152"/>
    </location>
    <ligand>
        <name>substrate</name>
    </ligand>
</feature>
<feature type="site" description="Transition state stabilizer" evidence="1">
    <location>
        <position position="150"/>
    </location>
</feature>
<sequence>MLQVYLVRHGETQWNAERRIQGQSDSPLTAKGEQQAMQVATRAKELGITHIISSDLGRTRRTVEIIAQACGCDIIFDSRLRELNMGVLEKSHIDSLTEEEENWRRQLVNGTVDGRIPEGESMQELSDRVNAALESCRDLPQGSRPLLVSHGIALGCLVSTILGLPAWAERRLRLRNCSISRVDYQESLWLSSGWVVETAGDISHLDAPALDELQR</sequence>
<proteinExistence type="inferred from homology"/>
<gene>
    <name evidence="1" type="primary">gpmB</name>
    <name type="ordered locus">SDY_4656</name>
</gene>
<name>GPMB_SHIDS</name>
<dbReference type="EC" id="5.4.2.-" evidence="1"/>
<dbReference type="EMBL" id="CP000034">
    <property type="protein sequence ID" value="ABB64505.1"/>
    <property type="molecule type" value="Genomic_DNA"/>
</dbReference>
<dbReference type="RefSeq" id="WP_000942357.1">
    <property type="nucleotide sequence ID" value="NC_007606.1"/>
</dbReference>
<dbReference type="RefSeq" id="YP_405996.1">
    <property type="nucleotide sequence ID" value="NC_007606.1"/>
</dbReference>
<dbReference type="SMR" id="Q327K0"/>
<dbReference type="STRING" id="300267.SDY_4656"/>
<dbReference type="EnsemblBacteria" id="ABB64505">
    <property type="protein sequence ID" value="ABB64505"/>
    <property type="gene ID" value="SDY_4656"/>
</dbReference>
<dbReference type="KEGG" id="sdy:SDY_4656"/>
<dbReference type="PATRIC" id="fig|300267.13.peg.5518"/>
<dbReference type="HOGENOM" id="CLU_033323_9_5_6"/>
<dbReference type="UniPathway" id="UPA00109">
    <property type="reaction ID" value="UER00186"/>
</dbReference>
<dbReference type="Proteomes" id="UP000002716">
    <property type="component" value="Chromosome"/>
</dbReference>
<dbReference type="GO" id="GO:0005737">
    <property type="term" value="C:cytoplasm"/>
    <property type="evidence" value="ECO:0007669"/>
    <property type="project" value="TreeGrafter"/>
</dbReference>
<dbReference type="GO" id="GO:0016791">
    <property type="term" value="F:phosphatase activity"/>
    <property type="evidence" value="ECO:0007669"/>
    <property type="project" value="TreeGrafter"/>
</dbReference>
<dbReference type="GO" id="GO:0004619">
    <property type="term" value="F:phosphoglycerate mutase activity"/>
    <property type="evidence" value="ECO:0007669"/>
    <property type="project" value="UniProtKB-UniRule"/>
</dbReference>
<dbReference type="GO" id="GO:0006096">
    <property type="term" value="P:glycolytic process"/>
    <property type="evidence" value="ECO:0007669"/>
    <property type="project" value="UniProtKB-UniRule"/>
</dbReference>
<dbReference type="CDD" id="cd07067">
    <property type="entry name" value="HP_PGM_like"/>
    <property type="match status" value="1"/>
</dbReference>
<dbReference type="Gene3D" id="3.40.50.1240">
    <property type="entry name" value="Phosphoglycerate mutase-like"/>
    <property type="match status" value="1"/>
</dbReference>
<dbReference type="HAMAP" id="MF_01040">
    <property type="entry name" value="PGAM_GpmB"/>
    <property type="match status" value="1"/>
</dbReference>
<dbReference type="InterPro" id="IPR013078">
    <property type="entry name" value="His_Pase_superF_clade-1"/>
</dbReference>
<dbReference type="InterPro" id="IPR029033">
    <property type="entry name" value="His_PPase_superfam"/>
</dbReference>
<dbReference type="InterPro" id="IPR001345">
    <property type="entry name" value="PG/BPGM_mutase_AS"/>
</dbReference>
<dbReference type="InterPro" id="IPR050275">
    <property type="entry name" value="PGM_Phosphatase"/>
</dbReference>
<dbReference type="InterPro" id="IPR023086">
    <property type="entry name" value="Phosphoglycerate_mutase_GpmB"/>
</dbReference>
<dbReference type="NCBIfam" id="NF002901">
    <property type="entry name" value="PRK03482.1"/>
    <property type="match status" value="1"/>
</dbReference>
<dbReference type="PANTHER" id="PTHR48100">
    <property type="entry name" value="BROAD-SPECIFICITY PHOSPHATASE YOR283W-RELATED"/>
    <property type="match status" value="1"/>
</dbReference>
<dbReference type="PANTHER" id="PTHR48100:SF1">
    <property type="entry name" value="HISTIDINE PHOSPHATASE FAMILY PROTEIN-RELATED"/>
    <property type="match status" value="1"/>
</dbReference>
<dbReference type="Pfam" id="PF00300">
    <property type="entry name" value="His_Phos_1"/>
    <property type="match status" value="1"/>
</dbReference>
<dbReference type="SMART" id="SM00855">
    <property type="entry name" value="PGAM"/>
    <property type="match status" value="1"/>
</dbReference>
<dbReference type="SUPFAM" id="SSF53254">
    <property type="entry name" value="Phosphoglycerate mutase-like"/>
    <property type="match status" value="1"/>
</dbReference>
<dbReference type="PROSITE" id="PS00175">
    <property type="entry name" value="PG_MUTASE"/>
    <property type="match status" value="1"/>
</dbReference>
<accession>Q327K0</accession>
<comment type="catalytic activity">
    <reaction evidence="1">
        <text>(2R)-2-phosphoglycerate = (2R)-3-phosphoglycerate</text>
        <dbReference type="Rhea" id="RHEA:15901"/>
        <dbReference type="ChEBI" id="CHEBI:58272"/>
        <dbReference type="ChEBI" id="CHEBI:58289"/>
    </reaction>
</comment>
<comment type="pathway">
    <text evidence="1">Carbohydrate degradation; glycolysis; pyruvate from D-glyceraldehyde 3-phosphate: step 3/5.</text>
</comment>
<comment type="similarity">
    <text evidence="1">Belongs to the phosphoglycerate mutase family. GpmB subfamily.</text>
</comment>
<keyword id="KW-0324">Glycolysis</keyword>
<keyword id="KW-0413">Isomerase</keyword>
<keyword id="KW-1185">Reference proteome</keyword>
<evidence type="ECO:0000255" key="1">
    <source>
        <dbReference type="HAMAP-Rule" id="MF_01040"/>
    </source>
</evidence>
<reference key="1">
    <citation type="journal article" date="2005" name="Nucleic Acids Res.">
        <title>Genome dynamics and diversity of Shigella species, the etiologic agents of bacillary dysentery.</title>
        <authorList>
            <person name="Yang F."/>
            <person name="Yang J."/>
            <person name="Zhang X."/>
            <person name="Chen L."/>
            <person name="Jiang Y."/>
            <person name="Yan Y."/>
            <person name="Tang X."/>
            <person name="Wang J."/>
            <person name="Xiong Z."/>
            <person name="Dong J."/>
            <person name="Xue Y."/>
            <person name="Zhu Y."/>
            <person name="Xu X."/>
            <person name="Sun L."/>
            <person name="Chen S."/>
            <person name="Nie H."/>
            <person name="Peng J."/>
            <person name="Xu J."/>
            <person name="Wang Y."/>
            <person name="Yuan Z."/>
            <person name="Wen Y."/>
            <person name="Yao Z."/>
            <person name="Shen Y."/>
            <person name="Qiang B."/>
            <person name="Hou Y."/>
            <person name="Yu J."/>
            <person name="Jin Q."/>
        </authorList>
    </citation>
    <scope>NUCLEOTIDE SEQUENCE [LARGE SCALE GENOMIC DNA]</scope>
    <source>
        <strain>Sd197</strain>
    </source>
</reference>
<protein>
    <recommendedName>
        <fullName evidence="1">Probable phosphoglycerate mutase GpmB</fullName>
        <ecNumber evidence="1">5.4.2.-</ecNumber>
    </recommendedName>
    <alternativeName>
        <fullName evidence="1">PGAM</fullName>
    </alternativeName>
    <alternativeName>
        <fullName evidence="1">Phosphoglyceromutase</fullName>
    </alternativeName>
</protein>